<dbReference type="EMBL" id="AK098842">
    <property type="protein sequence ID" value="BAC05432.1"/>
    <property type="molecule type" value="mRNA"/>
</dbReference>
<dbReference type="EMBL" id="AC008372">
    <property type="status" value="NOT_ANNOTATED_CDS"/>
    <property type="molecule type" value="Genomic_DNA"/>
</dbReference>
<dbReference type="EMBL" id="BC107147">
    <property type="status" value="NOT_ANNOTATED_CDS"/>
    <property type="molecule type" value="mRNA"/>
</dbReference>
<dbReference type="EMBL" id="BC113929">
    <property type="protein sequence ID" value="AAI13930.1"/>
    <property type="molecule type" value="mRNA"/>
</dbReference>
<dbReference type="EMBL" id="BC113986">
    <property type="status" value="NOT_ANNOTATED_CDS"/>
    <property type="molecule type" value="mRNA"/>
</dbReference>
<dbReference type="RefSeq" id="NP_001167449.1">
    <property type="nucleotide sequence ID" value="NM_001173978.1"/>
</dbReference>
<dbReference type="RefSeq" id="NP_777603.1">
    <property type="nucleotide sequence ID" value="NM_174943.3"/>
</dbReference>
<dbReference type="BioGRID" id="129609">
    <property type="interactions" value="19"/>
</dbReference>
<dbReference type="IntAct" id="Q8N769">
    <property type="interactions" value="1"/>
</dbReference>
<dbReference type="STRING" id="9606.ENSP00000348145"/>
<dbReference type="BioMuta" id="C14orf178"/>
<dbReference type="PaxDb" id="9606-ENSP00000348145"/>
<dbReference type="PeptideAtlas" id="Q8N769"/>
<dbReference type="UCSC" id="uc021rwv.2">
    <molecule id="Q8N769-1"/>
    <property type="organism name" value="human"/>
</dbReference>
<dbReference type="AGR" id="HGNC:26385"/>
<dbReference type="GeneCards" id="SLIRP-OT1"/>
<dbReference type="HGNC" id="HGNC:26385">
    <property type="gene designation" value="SLIRP-OT1"/>
</dbReference>
<dbReference type="neXtProt" id="NX_Q8N769"/>
<dbReference type="PharmGKB" id="PA145149665"/>
<dbReference type="eggNOG" id="ENOG502TK8A">
    <property type="taxonomic scope" value="Eukaryota"/>
</dbReference>
<dbReference type="HOGENOM" id="CLU_165588_0_0_1"/>
<dbReference type="InParanoid" id="Q8N769"/>
<dbReference type="PAN-GO" id="Q8N769">
    <property type="GO annotations" value="0 GO annotations based on evolutionary models"/>
</dbReference>
<dbReference type="PhylomeDB" id="Q8N769"/>
<dbReference type="TreeFam" id="TF351556"/>
<dbReference type="PathwayCommons" id="Q8N769"/>
<dbReference type="SignaLink" id="Q8N769"/>
<dbReference type="BioGRID-ORCS" id="283579">
    <property type="hits" value="30 hits in 781 CRISPR screens"/>
</dbReference>
<dbReference type="ChiTaRS" id="C14orf178">
    <property type="organism name" value="human"/>
</dbReference>
<dbReference type="GenomeRNAi" id="283579"/>
<dbReference type="Pharos" id="Q8N769">
    <property type="development level" value="Tdark"/>
</dbReference>
<dbReference type="PRO" id="PR:Q8N769"/>
<dbReference type="Proteomes" id="UP000005640">
    <property type="component" value="Chromosome 14"/>
</dbReference>
<dbReference type="RNAct" id="Q8N769">
    <property type="molecule type" value="protein"/>
</dbReference>
<dbReference type="PRINTS" id="PR02045">
    <property type="entry name" value="F138DOMAIN"/>
</dbReference>
<reference key="1">
    <citation type="journal article" date="2004" name="Nat. Genet.">
        <title>Complete sequencing and characterization of 21,243 full-length human cDNAs.</title>
        <authorList>
            <person name="Ota T."/>
            <person name="Suzuki Y."/>
            <person name="Nishikawa T."/>
            <person name="Otsuki T."/>
            <person name="Sugiyama T."/>
            <person name="Irie R."/>
            <person name="Wakamatsu A."/>
            <person name="Hayashi K."/>
            <person name="Sato H."/>
            <person name="Nagai K."/>
            <person name="Kimura K."/>
            <person name="Makita H."/>
            <person name="Sekine M."/>
            <person name="Obayashi M."/>
            <person name="Nishi T."/>
            <person name="Shibahara T."/>
            <person name="Tanaka T."/>
            <person name="Ishii S."/>
            <person name="Yamamoto J."/>
            <person name="Saito K."/>
            <person name="Kawai Y."/>
            <person name="Isono Y."/>
            <person name="Nakamura Y."/>
            <person name="Nagahari K."/>
            <person name="Murakami K."/>
            <person name="Yasuda T."/>
            <person name="Iwayanagi T."/>
            <person name="Wagatsuma M."/>
            <person name="Shiratori A."/>
            <person name="Sudo H."/>
            <person name="Hosoiri T."/>
            <person name="Kaku Y."/>
            <person name="Kodaira H."/>
            <person name="Kondo H."/>
            <person name="Sugawara M."/>
            <person name="Takahashi M."/>
            <person name="Kanda K."/>
            <person name="Yokoi T."/>
            <person name="Furuya T."/>
            <person name="Kikkawa E."/>
            <person name="Omura Y."/>
            <person name="Abe K."/>
            <person name="Kamihara K."/>
            <person name="Katsuta N."/>
            <person name="Sato K."/>
            <person name="Tanikawa M."/>
            <person name="Yamazaki M."/>
            <person name="Ninomiya K."/>
            <person name="Ishibashi T."/>
            <person name="Yamashita H."/>
            <person name="Murakawa K."/>
            <person name="Fujimori K."/>
            <person name="Tanai H."/>
            <person name="Kimata M."/>
            <person name="Watanabe M."/>
            <person name="Hiraoka S."/>
            <person name="Chiba Y."/>
            <person name="Ishida S."/>
            <person name="Ono Y."/>
            <person name="Takiguchi S."/>
            <person name="Watanabe S."/>
            <person name="Yosida M."/>
            <person name="Hotuta T."/>
            <person name="Kusano J."/>
            <person name="Kanehori K."/>
            <person name="Takahashi-Fujii A."/>
            <person name="Hara H."/>
            <person name="Tanase T.-O."/>
            <person name="Nomura Y."/>
            <person name="Togiya S."/>
            <person name="Komai F."/>
            <person name="Hara R."/>
            <person name="Takeuchi K."/>
            <person name="Arita M."/>
            <person name="Imose N."/>
            <person name="Musashino K."/>
            <person name="Yuuki H."/>
            <person name="Oshima A."/>
            <person name="Sasaki N."/>
            <person name="Aotsuka S."/>
            <person name="Yoshikawa Y."/>
            <person name="Matsunawa H."/>
            <person name="Ichihara T."/>
            <person name="Shiohata N."/>
            <person name="Sano S."/>
            <person name="Moriya S."/>
            <person name="Momiyama H."/>
            <person name="Satoh N."/>
            <person name="Takami S."/>
            <person name="Terashima Y."/>
            <person name="Suzuki O."/>
            <person name="Nakagawa S."/>
            <person name="Senoh A."/>
            <person name="Mizoguchi H."/>
            <person name="Goto Y."/>
            <person name="Shimizu F."/>
            <person name="Wakebe H."/>
            <person name="Hishigaki H."/>
            <person name="Watanabe T."/>
            <person name="Sugiyama A."/>
            <person name="Takemoto M."/>
            <person name="Kawakami B."/>
            <person name="Yamazaki M."/>
            <person name="Watanabe K."/>
            <person name="Kumagai A."/>
            <person name="Itakura S."/>
            <person name="Fukuzumi Y."/>
            <person name="Fujimori Y."/>
            <person name="Komiyama M."/>
            <person name="Tashiro H."/>
            <person name="Tanigami A."/>
            <person name="Fujiwara T."/>
            <person name="Ono T."/>
            <person name="Yamada K."/>
            <person name="Fujii Y."/>
            <person name="Ozaki K."/>
            <person name="Hirao M."/>
            <person name="Ohmori Y."/>
            <person name="Kawabata A."/>
            <person name="Hikiji T."/>
            <person name="Kobatake N."/>
            <person name="Inagaki H."/>
            <person name="Ikema Y."/>
            <person name="Okamoto S."/>
            <person name="Okitani R."/>
            <person name="Kawakami T."/>
            <person name="Noguchi S."/>
            <person name="Itoh T."/>
            <person name="Shigeta K."/>
            <person name="Senba T."/>
            <person name="Matsumura K."/>
            <person name="Nakajima Y."/>
            <person name="Mizuno T."/>
            <person name="Morinaga M."/>
            <person name="Sasaki M."/>
            <person name="Togashi T."/>
            <person name="Oyama M."/>
            <person name="Hata H."/>
            <person name="Watanabe M."/>
            <person name="Komatsu T."/>
            <person name="Mizushima-Sugano J."/>
            <person name="Satoh T."/>
            <person name="Shirai Y."/>
            <person name="Takahashi Y."/>
            <person name="Nakagawa K."/>
            <person name="Okumura K."/>
            <person name="Nagase T."/>
            <person name="Nomura N."/>
            <person name="Kikuchi H."/>
            <person name="Masuho Y."/>
            <person name="Yamashita R."/>
            <person name="Nakai K."/>
            <person name="Yada T."/>
            <person name="Nakamura Y."/>
            <person name="Ohara O."/>
            <person name="Isogai T."/>
            <person name="Sugano S."/>
        </authorList>
    </citation>
    <scope>NUCLEOTIDE SEQUENCE [LARGE SCALE MRNA] (ISOFORM 1)</scope>
    <source>
        <tissue>Testis</tissue>
    </source>
</reference>
<reference key="2">
    <citation type="journal article" date="2003" name="Nature">
        <title>The DNA sequence and analysis of human chromosome 14.</title>
        <authorList>
            <person name="Heilig R."/>
            <person name="Eckenberg R."/>
            <person name="Petit J.-L."/>
            <person name="Fonknechten N."/>
            <person name="Da Silva C."/>
            <person name="Cattolico L."/>
            <person name="Levy M."/>
            <person name="Barbe V."/>
            <person name="De Berardinis V."/>
            <person name="Ureta-Vidal A."/>
            <person name="Pelletier E."/>
            <person name="Vico V."/>
            <person name="Anthouard V."/>
            <person name="Rowen L."/>
            <person name="Madan A."/>
            <person name="Qin S."/>
            <person name="Sun H."/>
            <person name="Du H."/>
            <person name="Pepin K."/>
            <person name="Artiguenave F."/>
            <person name="Robert C."/>
            <person name="Cruaud C."/>
            <person name="Bruels T."/>
            <person name="Jaillon O."/>
            <person name="Friedlander L."/>
            <person name="Samson G."/>
            <person name="Brottier P."/>
            <person name="Cure S."/>
            <person name="Segurens B."/>
            <person name="Aniere F."/>
            <person name="Samain S."/>
            <person name="Crespeau H."/>
            <person name="Abbasi N."/>
            <person name="Aiach N."/>
            <person name="Boscus D."/>
            <person name="Dickhoff R."/>
            <person name="Dors M."/>
            <person name="Dubois I."/>
            <person name="Friedman C."/>
            <person name="Gouyvenoux M."/>
            <person name="James R."/>
            <person name="Madan A."/>
            <person name="Mairey-Estrada B."/>
            <person name="Mangenot S."/>
            <person name="Martins N."/>
            <person name="Menard M."/>
            <person name="Oztas S."/>
            <person name="Ratcliffe A."/>
            <person name="Shaffer T."/>
            <person name="Trask B."/>
            <person name="Vacherie B."/>
            <person name="Bellemere C."/>
            <person name="Belser C."/>
            <person name="Besnard-Gonnet M."/>
            <person name="Bartol-Mavel D."/>
            <person name="Boutard M."/>
            <person name="Briez-Silla S."/>
            <person name="Combette S."/>
            <person name="Dufosse-Laurent V."/>
            <person name="Ferron C."/>
            <person name="Lechaplais C."/>
            <person name="Louesse C."/>
            <person name="Muselet D."/>
            <person name="Magdelenat G."/>
            <person name="Pateau E."/>
            <person name="Petit E."/>
            <person name="Sirvain-Trukniewicz P."/>
            <person name="Trybou A."/>
            <person name="Vega-Czarny N."/>
            <person name="Bataille E."/>
            <person name="Bluet E."/>
            <person name="Bordelais I."/>
            <person name="Dubois M."/>
            <person name="Dumont C."/>
            <person name="Guerin T."/>
            <person name="Haffray S."/>
            <person name="Hammadi R."/>
            <person name="Muanga J."/>
            <person name="Pellouin V."/>
            <person name="Robert D."/>
            <person name="Wunderle E."/>
            <person name="Gauguet G."/>
            <person name="Roy A."/>
            <person name="Sainte-Marthe L."/>
            <person name="Verdier J."/>
            <person name="Verdier-Discala C."/>
            <person name="Hillier L.W."/>
            <person name="Fulton L."/>
            <person name="McPherson J."/>
            <person name="Matsuda F."/>
            <person name="Wilson R."/>
            <person name="Scarpelli C."/>
            <person name="Gyapay G."/>
            <person name="Wincker P."/>
            <person name="Saurin W."/>
            <person name="Quetier F."/>
            <person name="Waterston R."/>
            <person name="Hood L."/>
            <person name="Weissenbach J."/>
        </authorList>
    </citation>
    <scope>NUCLEOTIDE SEQUENCE [LARGE SCALE GENOMIC DNA]</scope>
</reference>
<reference key="3">
    <citation type="journal article" date="2004" name="Genome Res.">
        <title>The status, quality, and expansion of the NIH full-length cDNA project: the Mammalian Gene Collection (MGC).</title>
        <authorList>
            <consortium name="The MGC Project Team"/>
        </authorList>
    </citation>
    <scope>NUCLEOTIDE SEQUENCE [LARGE SCALE MRNA] (ISOFORMS 2 AND 3)</scope>
    <scope>VARIANT TYR-26</scope>
</reference>
<evidence type="ECO:0000256" key="1">
    <source>
        <dbReference type="SAM" id="MobiDB-lite"/>
    </source>
</evidence>
<evidence type="ECO:0000269" key="2">
    <source>
    </source>
</evidence>
<evidence type="ECO:0000303" key="3">
    <source>
    </source>
</evidence>
<evidence type="ECO:0000305" key="4"/>
<evidence type="ECO:0000312" key="5">
    <source>
        <dbReference type="HGNC" id="HGNC:26385"/>
    </source>
</evidence>
<sequence length="122" mass="13377">MGREMKKTGTPRPFRIEDPNQQPTWHDQPEMGSHYFAQAGLELLGSSNPPASASQSAGITGVSHCARPGEHDLNHTVFQVKDSTFLRHLESDRPEFKSCLPPHFTEPSVSLSTSEGCEDAMG</sequence>
<keyword id="KW-0025">Alternative splicing</keyword>
<keyword id="KW-1185">Reference proteome</keyword>
<feature type="chain" id="PRO_0000274284" description="Putative uncharacterized protein SLIRP-OT1">
    <location>
        <begin position="1"/>
        <end position="122"/>
    </location>
</feature>
<feature type="region of interest" description="Disordered" evidence="1">
    <location>
        <begin position="1"/>
        <end position="30"/>
    </location>
</feature>
<feature type="region of interest" description="Disordered" evidence="1">
    <location>
        <begin position="96"/>
        <end position="122"/>
    </location>
</feature>
<feature type="splice variant" id="VSP_022698" description="In isoform 2." evidence="3">
    <location>
        <begin position="25"/>
        <end position="122"/>
    </location>
</feature>
<feature type="splice variant" id="VSP_022699" description="In isoform 3." evidence="3">
    <original>EMGSHYFA</original>
    <variation>GTESVFWL</variation>
    <location>
        <begin position="30"/>
        <end position="37"/>
    </location>
</feature>
<feature type="splice variant" id="VSP_022700" description="In isoform 3." evidence="3">
    <location>
        <begin position="38"/>
        <end position="122"/>
    </location>
</feature>
<feature type="sequence variant" id="VAR_030248" description="In dbSNP:rs8015313." evidence="2">
    <original>H</original>
    <variation>Y</variation>
    <location>
        <position position="26"/>
    </location>
</feature>
<organism>
    <name type="scientific">Homo sapiens</name>
    <name type="common">Human</name>
    <dbReference type="NCBI Taxonomy" id="9606"/>
    <lineage>
        <taxon>Eukaryota</taxon>
        <taxon>Metazoa</taxon>
        <taxon>Chordata</taxon>
        <taxon>Craniata</taxon>
        <taxon>Vertebrata</taxon>
        <taxon>Euteleostomi</taxon>
        <taxon>Mammalia</taxon>
        <taxon>Eutheria</taxon>
        <taxon>Euarchontoglires</taxon>
        <taxon>Primates</taxon>
        <taxon>Haplorrhini</taxon>
        <taxon>Catarrhini</taxon>
        <taxon>Hominidae</taxon>
        <taxon>Homo</taxon>
    </lineage>
</organism>
<protein>
    <recommendedName>
        <fullName evidence="5">Putative uncharacterized protein SLIRP-OT1</fullName>
    </recommendedName>
    <alternativeName>
        <fullName evidence="5">SLIRP overlapping transcript 1</fullName>
    </alternativeName>
    <alternativeName>
        <fullName>Uncharacterized protein C14orf178</fullName>
    </alternativeName>
</protein>
<proteinExistence type="uncertain"/>
<accession>Q8N769</accession>
<accession>Q2HIX2</accession>
<accession>Q3KNR7</accession>
<name>CN178_HUMAN</name>
<gene>
    <name evidence="5" type="primary">SLIRP-OT1</name>
    <name evidence="5" type="synonym">C14orf178</name>
</gene>
<comment type="alternative products">
    <event type="alternative splicing"/>
    <isoform>
        <id>Q8N769-1</id>
        <name>1</name>
        <sequence type="displayed"/>
    </isoform>
    <isoform>
        <id>Q8N769-2</id>
        <name>2</name>
        <sequence type="described" ref="VSP_022698"/>
    </isoform>
    <isoform>
        <id>Q8N769-3</id>
        <name>3</name>
        <sequence type="described" ref="VSP_022699 VSP_022700"/>
    </isoform>
</comment>
<comment type="caution">
    <text evidence="4">Product of a dubious CDS prediction. May be a non-coding RNA.</text>
</comment>